<accession>A9HY36</accession>
<protein>
    <recommendedName>
        <fullName evidence="1">ATP synthase subunit b</fullName>
    </recommendedName>
    <alternativeName>
        <fullName evidence="1">ATP synthase F(0) sector subunit b</fullName>
    </alternativeName>
    <alternativeName>
        <fullName evidence="1">ATPase subunit I</fullName>
    </alternativeName>
    <alternativeName>
        <fullName evidence="1">F-type ATPase subunit b</fullName>
        <shortName evidence="1">F-ATPase subunit b</shortName>
    </alternativeName>
</protein>
<sequence>MNLNATIFFQMLVFFVLGWFTMKFVWPPLTKAMDERRQKIADGLAAAEKGKADLAQAQARVSLIEASAKSENHARIIEAEKQAASLIEQARREAEAERARIVAQAAQDAAQEVQRARDALRDDVAALAVKGAEQILKREVDARAHAELLNQLKAQL</sequence>
<organism>
    <name type="scientific">Bordetella petrii (strain ATCC BAA-461 / DSM 12804 / CCUG 43448)</name>
    <dbReference type="NCBI Taxonomy" id="340100"/>
    <lineage>
        <taxon>Bacteria</taxon>
        <taxon>Pseudomonadati</taxon>
        <taxon>Pseudomonadota</taxon>
        <taxon>Betaproteobacteria</taxon>
        <taxon>Burkholderiales</taxon>
        <taxon>Alcaligenaceae</taxon>
        <taxon>Bordetella</taxon>
    </lineage>
</organism>
<gene>
    <name evidence="1" type="primary">atpF</name>
    <name type="ordered locus">Bpet0338</name>
</gene>
<name>ATPF_BORPD</name>
<feature type="chain" id="PRO_0000368360" description="ATP synthase subunit b">
    <location>
        <begin position="1"/>
        <end position="156"/>
    </location>
</feature>
<feature type="transmembrane region" description="Helical" evidence="1">
    <location>
        <begin position="7"/>
        <end position="27"/>
    </location>
</feature>
<proteinExistence type="inferred from homology"/>
<reference key="1">
    <citation type="journal article" date="2008" name="BMC Genomics">
        <title>The missing link: Bordetella petrii is endowed with both the metabolic versatility of environmental bacteria and virulence traits of pathogenic Bordetellae.</title>
        <authorList>
            <person name="Gross R."/>
            <person name="Guzman C.A."/>
            <person name="Sebaihia M."/>
            <person name="Martin dos Santos V.A.P."/>
            <person name="Pieper D.H."/>
            <person name="Koebnik R."/>
            <person name="Lechner M."/>
            <person name="Bartels D."/>
            <person name="Buhrmester J."/>
            <person name="Choudhuri J.V."/>
            <person name="Ebensen T."/>
            <person name="Gaigalat L."/>
            <person name="Herrmann S."/>
            <person name="Khachane A.N."/>
            <person name="Larisch C."/>
            <person name="Link S."/>
            <person name="Linke B."/>
            <person name="Meyer F."/>
            <person name="Mormann S."/>
            <person name="Nakunst D."/>
            <person name="Rueckert C."/>
            <person name="Schneiker-Bekel S."/>
            <person name="Schulze K."/>
            <person name="Voerholter F.-J."/>
            <person name="Yevsa T."/>
            <person name="Engle J.T."/>
            <person name="Goldman W.E."/>
            <person name="Puehler A."/>
            <person name="Goebel U.B."/>
            <person name="Goesmann A."/>
            <person name="Bloecker H."/>
            <person name="Kaiser O."/>
            <person name="Martinez-Arias R."/>
        </authorList>
    </citation>
    <scope>NUCLEOTIDE SEQUENCE [LARGE SCALE GENOMIC DNA]</scope>
    <source>
        <strain>ATCC BAA-461 / DSM 12804 / CCUG 43448</strain>
    </source>
</reference>
<comment type="function">
    <text evidence="1">F(1)F(0) ATP synthase produces ATP from ADP in the presence of a proton or sodium gradient. F-type ATPases consist of two structural domains, F(1) containing the extramembraneous catalytic core and F(0) containing the membrane proton channel, linked together by a central stalk and a peripheral stalk. During catalysis, ATP synthesis in the catalytic domain of F(1) is coupled via a rotary mechanism of the central stalk subunits to proton translocation.</text>
</comment>
<comment type="function">
    <text evidence="1">Component of the F(0) channel, it forms part of the peripheral stalk, linking F(1) to F(0).</text>
</comment>
<comment type="subunit">
    <text evidence="1">F-type ATPases have 2 components, F(1) - the catalytic core - and F(0) - the membrane proton channel. F(1) has five subunits: alpha(3), beta(3), gamma(1), delta(1), epsilon(1). F(0) has three main subunits: a(1), b(2) and c(10-14). The alpha and beta chains form an alternating ring which encloses part of the gamma chain. F(1) is attached to F(0) by a central stalk formed by the gamma and epsilon chains, while a peripheral stalk is formed by the delta and b chains.</text>
</comment>
<comment type="subcellular location">
    <subcellularLocation>
        <location evidence="1">Cell inner membrane</location>
        <topology evidence="1">Single-pass membrane protein</topology>
    </subcellularLocation>
</comment>
<comment type="similarity">
    <text evidence="1">Belongs to the ATPase B chain family.</text>
</comment>
<evidence type="ECO:0000255" key="1">
    <source>
        <dbReference type="HAMAP-Rule" id="MF_01398"/>
    </source>
</evidence>
<keyword id="KW-0066">ATP synthesis</keyword>
<keyword id="KW-0997">Cell inner membrane</keyword>
<keyword id="KW-1003">Cell membrane</keyword>
<keyword id="KW-0138">CF(0)</keyword>
<keyword id="KW-0375">Hydrogen ion transport</keyword>
<keyword id="KW-0406">Ion transport</keyword>
<keyword id="KW-0472">Membrane</keyword>
<keyword id="KW-0812">Transmembrane</keyword>
<keyword id="KW-1133">Transmembrane helix</keyword>
<keyword id="KW-0813">Transport</keyword>
<dbReference type="EMBL" id="AM902716">
    <property type="protein sequence ID" value="CAP40670.1"/>
    <property type="molecule type" value="Genomic_DNA"/>
</dbReference>
<dbReference type="SMR" id="A9HY36"/>
<dbReference type="STRING" id="94624.Bpet0338"/>
<dbReference type="KEGG" id="bpt:Bpet0338"/>
<dbReference type="eggNOG" id="COG0711">
    <property type="taxonomic scope" value="Bacteria"/>
</dbReference>
<dbReference type="Proteomes" id="UP000001225">
    <property type="component" value="Chromosome"/>
</dbReference>
<dbReference type="GO" id="GO:0005886">
    <property type="term" value="C:plasma membrane"/>
    <property type="evidence" value="ECO:0007669"/>
    <property type="project" value="UniProtKB-SubCell"/>
</dbReference>
<dbReference type="GO" id="GO:0045259">
    <property type="term" value="C:proton-transporting ATP synthase complex"/>
    <property type="evidence" value="ECO:0007669"/>
    <property type="project" value="UniProtKB-KW"/>
</dbReference>
<dbReference type="GO" id="GO:0046933">
    <property type="term" value="F:proton-transporting ATP synthase activity, rotational mechanism"/>
    <property type="evidence" value="ECO:0007669"/>
    <property type="project" value="UniProtKB-UniRule"/>
</dbReference>
<dbReference type="GO" id="GO:0046961">
    <property type="term" value="F:proton-transporting ATPase activity, rotational mechanism"/>
    <property type="evidence" value="ECO:0007669"/>
    <property type="project" value="TreeGrafter"/>
</dbReference>
<dbReference type="CDD" id="cd06503">
    <property type="entry name" value="ATP-synt_Fo_b"/>
    <property type="match status" value="1"/>
</dbReference>
<dbReference type="Gene3D" id="6.10.250.1580">
    <property type="match status" value="1"/>
</dbReference>
<dbReference type="HAMAP" id="MF_01398">
    <property type="entry name" value="ATP_synth_b_bprime"/>
    <property type="match status" value="1"/>
</dbReference>
<dbReference type="InterPro" id="IPR028987">
    <property type="entry name" value="ATP_synth_B-like_membr_sf"/>
</dbReference>
<dbReference type="InterPro" id="IPR002146">
    <property type="entry name" value="ATP_synth_b/b'su_bac/chlpt"/>
</dbReference>
<dbReference type="InterPro" id="IPR005864">
    <property type="entry name" value="ATP_synth_F0_bsu_bac"/>
</dbReference>
<dbReference type="InterPro" id="IPR050059">
    <property type="entry name" value="ATP_synthase_B_chain"/>
</dbReference>
<dbReference type="NCBIfam" id="TIGR01144">
    <property type="entry name" value="ATP_synt_b"/>
    <property type="match status" value="1"/>
</dbReference>
<dbReference type="NCBIfam" id="NF004411">
    <property type="entry name" value="PRK05759.1-2"/>
    <property type="match status" value="1"/>
</dbReference>
<dbReference type="PANTHER" id="PTHR33445:SF1">
    <property type="entry name" value="ATP SYNTHASE SUBUNIT B"/>
    <property type="match status" value="1"/>
</dbReference>
<dbReference type="PANTHER" id="PTHR33445">
    <property type="entry name" value="ATP SYNTHASE SUBUNIT B', CHLOROPLASTIC"/>
    <property type="match status" value="1"/>
</dbReference>
<dbReference type="Pfam" id="PF00430">
    <property type="entry name" value="ATP-synt_B"/>
    <property type="match status" value="1"/>
</dbReference>
<dbReference type="SUPFAM" id="SSF81573">
    <property type="entry name" value="F1F0 ATP synthase subunit B, membrane domain"/>
    <property type="match status" value="1"/>
</dbReference>